<reference key="1">
    <citation type="journal article" date="2005" name="Nature">
        <title>The genome of the social amoeba Dictyostelium discoideum.</title>
        <authorList>
            <person name="Eichinger L."/>
            <person name="Pachebat J.A."/>
            <person name="Gloeckner G."/>
            <person name="Rajandream M.A."/>
            <person name="Sucgang R."/>
            <person name="Berriman M."/>
            <person name="Song J."/>
            <person name="Olsen R."/>
            <person name="Szafranski K."/>
            <person name="Xu Q."/>
            <person name="Tunggal B."/>
            <person name="Kummerfeld S."/>
            <person name="Madera M."/>
            <person name="Konfortov B.A."/>
            <person name="Rivero F."/>
            <person name="Bankier A.T."/>
            <person name="Lehmann R."/>
            <person name="Hamlin N."/>
            <person name="Davies R."/>
            <person name="Gaudet P."/>
            <person name="Fey P."/>
            <person name="Pilcher K."/>
            <person name="Chen G."/>
            <person name="Saunders D."/>
            <person name="Sodergren E.J."/>
            <person name="Davis P."/>
            <person name="Kerhornou A."/>
            <person name="Nie X."/>
            <person name="Hall N."/>
            <person name="Anjard C."/>
            <person name="Hemphill L."/>
            <person name="Bason N."/>
            <person name="Farbrother P."/>
            <person name="Desany B."/>
            <person name="Just E."/>
            <person name="Morio T."/>
            <person name="Rost R."/>
            <person name="Churcher C.M."/>
            <person name="Cooper J."/>
            <person name="Haydock S."/>
            <person name="van Driessche N."/>
            <person name="Cronin A."/>
            <person name="Goodhead I."/>
            <person name="Muzny D.M."/>
            <person name="Mourier T."/>
            <person name="Pain A."/>
            <person name="Lu M."/>
            <person name="Harper D."/>
            <person name="Lindsay R."/>
            <person name="Hauser H."/>
            <person name="James K.D."/>
            <person name="Quiles M."/>
            <person name="Madan Babu M."/>
            <person name="Saito T."/>
            <person name="Buchrieser C."/>
            <person name="Wardroper A."/>
            <person name="Felder M."/>
            <person name="Thangavelu M."/>
            <person name="Johnson D."/>
            <person name="Knights A."/>
            <person name="Loulseged H."/>
            <person name="Mungall K.L."/>
            <person name="Oliver K."/>
            <person name="Price C."/>
            <person name="Quail M.A."/>
            <person name="Urushihara H."/>
            <person name="Hernandez J."/>
            <person name="Rabbinowitsch E."/>
            <person name="Steffen D."/>
            <person name="Sanders M."/>
            <person name="Ma J."/>
            <person name="Kohara Y."/>
            <person name="Sharp S."/>
            <person name="Simmonds M.N."/>
            <person name="Spiegler S."/>
            <person name="Tivey A."/>
            <person name="Sugano S."/>
            <person name="White B."/>
            <person name="Walker D."/>
            <person name="Woodward J.R."/>
            <person name="Winckler T."/>
            <person name="Tanaka Y."/>
            <person name="Shaulsky G."/>
            <person name="Schleicher M."/>
            <person name="Weinstock G.M."/>
            <person name="Rosenthal A."/>
            <person name="Cox E.C."/>
            <person name="Chisholm R.L."/>
            <person name="Gibbs R.A."/>
            <person name="Loomis W.F."/>
            <person name="Platzer M."/>
            <person name="Kay R.R."/>
            <person name="Williams J.G."/>
            <person name="Dear P.H."/>
            <person name="Noegel A.A."/>
            <person name="Barrell B.G."/>
            <person name="Kuspa A."/>
        </authorList>
    </citation>
    <scope>NUCLEOTIDE SEQUENCE [LARGE SCALE GENOMIC DNA]</scope>
    <source>
        <strain>AX4</strain>
    </source>
</reference>
<reference key="2">
    <citation type="submission" date="2009-07" db="UniProtKB">
        <authorList>
            <person name="Bienvenut W.V."/>
            <person name="Ura S."/>
            <person name="Insall R.H."/>
        </authorList>
    </citation>
    <scope>PROTEIN SEQUENCE OF 1-15; 32-80; 116-136; 144-154; 177-188 AND 203-217</scope>
    <scope>IDENTIFICATION BY MASS SPECTROMETRY</scope>
    <source>
        <strain>AX2</strain>
    </source>
</reference>
<sequence length="236" mass="26166">MKLNIAYPVNGSQKKINIEDKNKVRCFMEKRIGQEVEATTLGDEFKGYVFKITGGNDTEGFPMMQGVGAPTRVRLLLDGRSGCFKPSRDGERKRKSVRGCIVAEDIASLQLIIVKKGDAEIPGLTDVSFPASKGPKRASNIRKLFKLSKDEDVRSFVIRRELPATDKRKAKSKAPKIQRLVTPTTVARRKALRAKKAARHTKASNEAAEYAKLVAQRQQAKAKRSVKVSSKKVVAK</sequence>
<organism>
    <name type="scientific">Dictyostelium discoideum</name>
    <name type="common">Social amoeba</name>
    <dbReference type="NCBI Taxonomy" id="44689"/>
    <lineage>
        <taxon>Eukaryota</taxon>
        <taxon>Amoebozoa</taxon>
        <taxon>Evosea</taxon>
        <taxon>Eumycetozoa</taxon>
        <taxon>Dictyostelia</taxon>
        <taxon>Dictyosteliales</taxon>
        <taxon>Dictyosteliaceae</taxon>
        <taxon>Dictyostelium</taxon>
    </lineage>
</organism>
<gene>
    <name type="primary">rps6</name>
    <name type="ORF">DDB_G0280823</name>
</gene>
<name>RS6_DICDI</name>
<protein>
    <recommendedName>
        <fullName evidence="2">Small ribosomal subunit protein eS6</fullName>
    </recommendedName>
    <alternativeName>
        <fullName>40S ribosomal protein S6</fullName>
    </alternativeName>
</protein>
<keyword id="KW-0963">Cytoplasm</keyword>
<keyword id="KW-0903">Direct protein sequencing</keyword>
<keyword id="KW-0539">Nucleus</keyword>
<keyword id="KW-0597">Phosphoprotein</keyword>
<keyword id="KW-1185">Reference proteome</keyword>
<keyword id="KW-0687">Ribonucleoprotein</keyword>
<keyword id="KW-0689">Ribosomal protein</keyword>
<feature type="chain" id="PRO_0000326190" description="Small ribosomal subunit protein eS6">
    <location>
        <begin position="1"/>
        <end position="236"/>
    </location>
</feature>
<accession>Q54UU3</accession>
<evidence type="ECO:0000250" key="1">
    <source>
        <dbReference type="UniProtKB" id="P62753"/>
    </source>
</evidence>
<evidence type="ECO:0000305" key="2"/>
<proteinExistence type="evidence at protein level"/>
<dbReference type="EMBL" id="AAFI02000025">
    <property type="protein sequence ID" value="EAL67023.1"/>
    <property type="molecule type" value="Genomic_DNA"/>
</dbReference>
<dbReference type="RefSeq" id="XP_640998.1">
    <property type="nucleotide sequence ID" value="XM_635906.1"/>
</dbReference>
<dbReference type="SMR" id="Q54UU3"/>
<dbReference type="FunCoup" id="Q54UU3">
    <property type="interactions" value="807"/>
</dbReference>
<dbReference type="STRING" id="44689.Q54UU3"/>
<dbReference type="PaxDb" id="44689-DDB0230023"/>
<dbReference type="EnsemblProtists" id="EAL67023">
    <property type="protein sequence ID" value="EAL67023"/>
    <property type="gene ID" value="DDB_G0280823"/>
</dbReference>
<dbReference type="GeneID" id="8621805"/>
<dbReference type="KEGG" id="ddi:DDB_G0280823"/>
<dbReference type="dictyBase" id="DDB_G0280823">
    <property type="gene designation" value="rps6"/>
</dbReference>
<dbReference type="VEuPathDB" id="AmoebaDB:DDB_G0280823"/>
<dbReference type="eggNOG" id="KOG1646">
    <property type="taxonomic scope" value="Eukaryota"/>
</dbReference>
<dbReference type="HOGENOM" id="CLU_046346_0_1_1"/>
<dbReference type="InParanoid" id="Q54UU3"/>
<dbReference type="OMA" id="KPRYKAP"/>
<dbReference type="PhylomeDB" id="Q54UU3"/>
<dbReference type="Reactome" id="R-DDI-156827">
    <property type="pathway name" value="L13a-mediated translational silencing of Ceruloplasmin expression"/>
</dbReference>
<dbReference type="Reactome" id="R-DDI-166208">
    <property type="pathway name" value="mTORC1-mediated signalling"/>
</dbReference>
<dbReference type="Reactome" id="R-DDI-1799339">
    <property type="pathway name" value="SRP-dependent cotranslational protein targeting to membrane"/>
</dbReference>
<dbReference type="Reactome" id="R-DDI-6791226">
    <property type="pathway name" value="Major pathway of rRNA processing in the nucleolus and cytosol"/>
</dbReference>
<dbReference type="Reactome" id="R-DDI-72689">
    <property type="pathway name" value="Formation of a pool of free 40S subunits"/>
</dbReference>
<dbReference type="Reactome" id="R-DDI-72695">
    <property type="pathway name" value="Formation of the ternary complex, and subsequently, the 43S complex"/>
</dbReference>
<dbReference type="Reactome" id="R-DDI-72702">
    <property type="pathway name" value="Ribosomal scanning and start codon recognition"/>
</dbReference>
<dbReference type="Reactome" id="R-DDI-72706">
    <property type="pathway name" value="GTP hydrolysis and joining of the 60S ribosomal subunit"/>
</dbReference>
<dbReference type="Reactome" id="R-DDI-9629569">
    <property type="pathway name" value="Protein hydroxylation"/>
</dbReference>
<dbReference type="Reactome" id="R-DDI-975956">
    <property type="pathway name" value="Nonsense Mediated Decay (NMD) independent of the Exon Junction Complex (EJC)"/>
</dbReference>
<dbReference type="Reactome" id="R-DDI-975957">
    <property type="pathway name" value="Nonsense Mediated Decay (NMD) enhanced by the Exon Junction Complex (EJC)"/>
</dbReference>
<dbReference type="PRO" id="PR:Q54UU3"/>
<dbReference type="Proteomes" id="UP000002195">
    <property type="component" value="Chromosome 3"/>
</dbReference>
<dbReference type="GO" id="GO:0005938">
    <property type="term" value="C:cell cortex"/>
    <property type="evidence" value="ECO:0000314"/>
    <property type="project" value="dictyBase"/>
</dbReference>
<dbReference type="GO" id="GO:0070938">
    <property type="term" value="C:contractile ring"/>
    <property type="evidence" value="ECO:0000314"/>
    <property type="project" value="dictyBase"/>
</dbReference>
<dbReference type="GO" id="GO:0031012">
    <property type="term" value="C:extracellular matrix"/>
    <property type="evidence" value="ECO:0007005"/>
    <property type="project" value="dictyBase"/>
</dbReference>
<dbReference type="GO" id="GO:0005730">
    <property type="term" value="C:nucleolus"/>
    <property type="evidence" value="ECO:0007669"/>
    <property type="project" value="UniProtKB-SubCell"/>
</dbReference>
<dbReference type="GO" id="GO:0005840">
    <property type="term" value="C:ribosome"/>
    <property type="evidence" value="ECO:0007669"/>
    <property type="project" value="UniProtKB-KW"/>
</dbReference>
<dbReference type="GO" id="GO:0032040">
    <property type="term" value="C:small-subunit processome"/>
    <property type="evidence" value="ECO:0000250"/>
    <property type="project" value="UniProtKB"/>
</dbReference>
<dbReference type="GO" id="GO:0003735">
    <property type="term" value="F:structural constituent of ribosome"/>
    <property type="evidence" value="ECO:0000250"/>
    <property type="project" value="dictyBase"/>
</dbReference>
<dbReference type="GO" id="GO:0000281">
    <property type="term" value="P:mitotic cytokinesis"/>
    <property type="evidence" value="ECO:0000315"/>
    <property type="project" value="dictyBase"/>
</dbReference>
<dbReference type="GO" id="GO:0042274">
    <property type="term" value="P:ribosomal small subunit biogenesis"/>
    <property type="evidence" value="ECO:0000250"/>
    <property type="project" value="UniProtKB"/>
</dbReference>
<dbReference type="GO" id="GO:0030587">
    <property type="term" value="P:sorocarp development"/>
    <property type="evidence" value="ECO:0000315"/>
    <property type="project" value="dictyBase"/>
</dbReference>
<dbReference type="GO" id="GO:0006412">
    <property type="term" value="P:translation"/>
    <property type="evidence" value="ECO:0000250"/>
    <property type="project" value="dictyBase"/>
</dbReference>
<dbReference type="Gene3D" id="1.20.5.2650">
    <property type="match status" value="1"/>
</dbReference>
<dbReference type="InterPro" id="IPR001377">
    <property type="entry name" value="Ribosomal_eS6"/>
</dbReference>
<dbReference type="InterPro" id="IPR014401">
    <property type="entry name" value="Ribosomal_eS6-like"/>
</dbReference>
<dbReference type="InterPro" id="IPR018282">
    <property type="entry name" value="Ribosomal_eS6_CS"/>
</dbReference>
<dbReference type="PANTHER" id="PTHR11502">
    <property type="entry name" value="40S RIBOSOMAL PROTEIN S6"/>
    <property type="match status" value="1"/>
</dbReference>
<dbReference type="Pfam" id="PF01092">
    <property type="entry name" value="Ribosomal_S6e"/>
    <property type="match status" value="1"/>
</dbReference>
<dbReference type="PIRSF" id="PIRSF002129">
    <property type="entry name" value="Ribosom_S6_euk"/>
    <property type="match status" value="1"/>
</dbReference>
<dbReference type="SMART" id="SM01405">
    <property type="entry name" value="Ribosomal_S6e"/>
    <property type="match status" value="1"/>
</dbReference>
<dbReference type="PROSITE" id="PS00578">
    <property type="entry name" value="RIBOSOMAL_S6E"/>
    <property type="match status" value="1"/>
</dbReference>
<comment type="function">
    <text evidence="1">Component of the 40S small ribosomal subunit. Plays an important role in controlling cell growth and proliferation through the selective translation of particular classes of mRNA. Part of the small subunit (SSU) processome, first precursor of the small eukaryotic ribosomal subunit. During the assembly of the SSU processome in the nucleolus, many ribosome biogenesis factors, an RNA chaperone and ribosomal proteins associate with the nascent pre-rRNA and work in concert to generate RNA folding, modifications, rearrangements and cleavage as well as targeted degradation of pre-ribosomal RNA by the RNA exosome.</text>
</comment>
<comment type="subunit">
    <text evidence="1">Component of the small ribosomal subunit. Part of the small subunit (SSU) processome, composed of more than 70 proteins and the RNA chaperone small nucleolar RNA (snoRNA) U3.</text>
</comment>
<comment type="subcellular location">
    <subcellularLocation>
        <location evidence="1">Cytoplasm</location>
    </subcellularLocation>
    <subcellularLocation>
        <location evidence="1">Nucleus</location>
        <location evidence="1">Nucleolus</location>
    </subcellularLocation>
</comment>
<comment type="PTM">
    <text evidence="1">Ribosomal protein S6 is the major substrate of protein kinases in eukaryote ribosomes.</text>
</comment>
<comment type="similarity">
    <text evidence="2">Belongs to the eukaryotic ribosomal protein eS6 family.</text>
</comment>